<sequence length="499" mass="54725">MARFVVAGPSEYLAITGWGIDDVKLAKKAWVFAGQKCSRFDISPVNYEFNVEAMSSEKLAFNLPAVFTIGPKITPAPAPEVDGASNQRRVLMPESEEKLLLYAKLIAPHDHASNHVKQLVKGVIEGETRVLAASMTMEEIFQGTKKFKQEVFDQVQLDLNKFGLYIYNANVKQLVDEPGHEYFSYLGKKTQQEAANKAKVDVAEERMKGEVGAKEREGLTRQNAAKVDAETKVVSVRQQGIGLREEAKVKAEVQVYENEREAEIAAAQAGLAMKKAGWEKQSKVAQVEAVKAVAIREAELQMEVERKNALRLTEKLKAEQLSKATVQYETQVQESNAALYNRQKAADATLYEQVKSAEARKAQADAMFFEQKLAEDARLYAKQKEAEALAMVGKAKVEYVTSMLQALGGDYGALRDYLMIDGGMYQEMARVNASAVSGMQPKISIWSGADGAAGEAGAGAMQQVAGVYKMLPPLLSTVHEQTGMQPPAWMGSLPKDGAN</sequence>
<gene>
    <name type="primary">FLOT2</name>
    <name type="ordered locus">Os10g0482700</name>
    <name type="ordered locus">LOC_Os10g34150</name>
    <name type="ORF">OsJ_31925</name>
    <name type="ORF">OSJNBa0012L23.46</name>
</gene>
<dbReference type="EMBL" id="AC051632">
    <property type="protein sequence ID" value="AAM91872.1"/>
    <property type="molecule type" value="Genomic_DNA"/>
</dbReference>
<dbReference type="EMBL" id="DP000086">
    <property type="protein sequence ID" value="AAP54318.1"/>
    <property type="molecule type" value="Genomic_DNA"/>
</dbReference>
<dbReference type="EMBL" id="AP014966">
    <property type="status" value="NOT_ANNOTATED_CDS"/>
    <property type="molecule type" value="Genomic_DNA"/>
</dbReference>
<dbReference type="EMBL" id="CM000147">
    <property type="protein sequence ID" value="EAZ16455.1"/>
    <property type="status" value="ALT_FRAME"/>
    <property type="molecule type" value="Genomic_DNA"/>
</dbReference>
<dbReference type="SMR" id="Q8LNW4"/>
<dbReference type="FunCoup" id="Q8LNW4">
    <property type="interactions" value="24"/>
</dbReference>
<dbReference type="STRING" id="39947.Q8LNW4"/>
<dbReference type="PaxDb" id="39947-Q8LNW4"/>
<dbReference type="eggNOG" id="KOG2668">
    <property type="taxonomic scope" value="Eukaryota"/>
</dbReference>
<dbReference type="HOGENOM" id="CLU_030844_1_1_1"/>
<dbReference type="InParanoid" id="Q8LNW4"/>
<dbReference type="OrthoDB" id="6080404at2759"/>
<dbReference type="Proteomes" id="UP000000763">
    <property type="component" value="Chromosome 10"/>
</dbReference>
<dbReference type="Proteomes" id="UP000007752">
    <property type="component" value="Chromosome 10"/>
</dbReference>
<dbReference type="Proteomes" id="UP000059680">
    <property type="component" value="Chromosome 10"/>
</dbReference>
<dbReference type="GO" id="GO:0005901">
    <property type="term" value="C:caveola"/>
    <property type="evidence" value="ECO:0007669"/>
    <property type="project" value="UniProtKB-SubCell"/>
</dbReference>
<dbReference type="GO" id="GO:0005886">
    <property type="term" value="C:plasma membrane"/>
    <property type="evidence" value="ECO:0000318"/>
    <property type="project" value="GO_Central"/>
</dbReference>
<dbReference type="GO" id="GO:0044853">
    <property type="term" value="C:plasma membrane raft"/>
    <property type="evidence" value="ECO:0000318"/>
    <property type="project" value="GO_Central"/>
</dbReference>
<dbReference type="CDD" id="cd03399">
    <property type="entry name" value="SPFH_flotillin"/>
    <property type="match status" value="1"/>
</dbReference>
<dbReference type="Gene3D" id="3.30.479.30">
    <property type="entry name" value="Band 7 domain"/>
    <property type="match status" value="1"/>
</dbReference>
<dbReference type="InterPro" id="IPR001107">
    <property type="entry name" value="Band_7"/>
</dbReference>
<dbReference type="InterPro" id="IPR036013">
    <property type="entry name" value="Band_7/SPFH_dom_sf"/>
</dbReference>
<dbReference type="InterPro" id="IPR027705">
    <property type="entry name" value="Flotillin_fam"/>
</dbReference>
<dbReference type="PANTHER" id="PTHR13806:SF23">
    <property type="entry name" value="FLOTILLIN-LIKE PROTEIN 2"/>
    <property type="match status" value="1"/>
</dbReference>
<dbReference type="PANTHER" id="PTHR13806">
    <property type="entry name" value="FLOTILLIN-RELATED"/>
    <property type="match status" value="1"/>
</dbReference>
<dbReference type="Pfam" id="PF01145">
    <property type="entry name" value="Band_7"/>
    <property type="match status" value="1"/>
</dbReference>
<dbReference type="SUPFAM" id="SSF117892">
    <property type="entry name" value="Band 7/SPFH domain"/>
    <property type="match status" value="1"/>
</dbReference>
<reference key="1">
    <citation type="journal article" date="2003" name="Science">
        <title>In-depth view of structure, activity, and evolution of rice chromosome 10.</title>
        <authorList>
            <person name="Yu Y."/>
            <person name="Rambo T."/>
            <person name="Currie J."/>
            <person name="Saski C."/>
            <person name="Kim H.-R."/>
            <person name="Collura K."/>
            <person name="Thompson S."/>
            <person name="Simmons J."/>
            <person name="Yang T.-J."/>
            <person name="Nah G."/>
            <person name="Patel A.J."/>
            <person name="Thurmond S."/>
            <person name="Henry D."/>
            <person name="Oates R."/>
            <person name="Palmer M."/>
            <person name="Pries G."/>
            <person name="Gibson J."/>
            <person name="Anderson H."/>
            <person name="Paradkar M."/>
            <person name="Crane L."/>
            <person name="Dale J."/>
            <person name="Carver M.B."/>
            <person name="Wood T."/>
            <person name="Frisch D."/>
            <person name="Engler F."/>
            <person name="Soderlund C."/>
            <person name="Palmer L.E."/>
            <person name="Teytelman L."/>
            <person name="Nascimento L."/>
            <person name="De la Bastide M."/>
            <person name="Spiegel L."/>
            <person name="Ware D."/>
            <person name="O'Shaughnessy A."/>
            <person name="Dike S."/>
            <person name="Dedhia N."/>
            <person name="Preston R."/>
            <person name="Huang E."/>
            <person name="Ferraro K."/>
            <person name="Kuit K."/>
            <person name="Miller B."/>
            <person name="Zutavern T."/>
            <person name="Katzenberger F."/>
            <person name="Muller S."/>
            <person name="Balija V."/>
            <person name="Martienssen R.A."/>
            <person name="Stein L."/>
            <person name="Minx P."/>
            <person name="Johnson D."/>
            <person name="Cordum H."/>
            <person name="Mardis E."/>
            <person name="Cheng Z."/>
            <person name="Jiang J."/>
            <person name="Wilson R."/>
            <person name="McCombie W.R."/>
            <person name="Wing R.A."/>
            <person name="Yuan Q."/>
            <person name="Ouyang S."/>
            <person name="Liu J."/>
            <person name="Jones K.M."/>
            <person name="Gansberger K."/>
            <person name="Moffat K."/>
            <person name="Hill J."/>
            <person name="Tsitrin T."/>
            <person name="Overton L."/>
            <person name="Bera J."/>
            <person name="Kim M."/>
            <person name="Jin S."/>
            <person name="Tallon L."/>
            <person name="Ciecko A."/>
            <person name="Pai G."/>
            <person name="Van Aken S."/>
            <person name="Utterback T."/>
            <person name="Reidmuller S."/>
            <person name="Bormann J."/>
            <person name="Feldblyum T."/>
            <person name="Hsiao J."/>
            <person name="Zismann V."/>
            <person name="Blunt S."/>
            <person name="de Vazeille A.R."/>
            <person name="Shaffer T."/>
            <person name="Koo H."/>
            <person name="Suh B."/>
            <person name="Yang Q."/>
            <person name="Haas B."/>
            <person name="Peterson J."/>
            <person name="Pertea M."/>
            <person name="Volfovsky N."/>
            <person name="Wortman J."/>
            <person name="White O."/>
            <person name="Salzberg S.L."/>
            <person name="Fraser C.M."/>
            <person name="Buell C.R."/>
            <person name="Messing J."/>
            <person name="Song R."/>
            <person name="Fuks G."/>
            <person name="Llaca V."/>
            <person name="Kovchak S."/>
            <person name="Young S."/>
            <person name="Bowers J.E."/>
            <person name="Paterson A.H."/>
            <person name="Johns M.A."/>
            <person name="Mao L."/>
            <person name="Pan H."/>
            <person name="Dean R.A."/>
        </authorList>
    </citation>
    <scope>NUCLEOTIDE SEQUENCE [LARGE SCALE GENOMIC DNA]</scope>
    <source>
        <strain>cv. Nipponbare</strain>
    </source>
</reference>
<reference key="2">
    <citation type="journal article" date="2005" name="Nature">
        <title>The map-based sequence of the rice genome.</title>
        <authorList>
            <consortium name="International rice genome sequencing project (IRGSP)"/>
        </authorList>
    </citation>
    <scope>NUCLEOTIDE SEQUENCE [LARGE SCALE GENOMIC DNA]</scope>
    <source>
        <strain>cv. Nipponbare</strain>
    </source>
</reference>
<reference key="3">
    <citation type="journal article" date="2013" name="Rice">
        <title>Improvement of the Oryza sativa Nipponbare reference genome using next generation sequence and optical map data.</title>
        <authorList>
            <person name="Kawahara Y."/>
            <person name="de la Bastide M."/>
            <person name="Hamilton J.P."/>
            <person name="Kanamori H."/>
            <person name="McCombie W.R."/>
            <person name="Ouyang S."/>
            <person name="Schwartz D.C."/>
            <person name="Tanaka T."/>
            <person name="Wu J."/>
            <person name="Zhou S."/>
            <person name="Childs K.L."/>
            <person name="Davidson R.M."/>
            <person name="Lin H."/>
            <person name="Quesada-Ocampo L."/>
            <person name="Vaillancourt B."/>
            <person name="Sakai H."/>
            <person name="Lee S.S."/>
            <person name="Kim J."/>
            <person name="Numa H."/>
            <person name="Itoh T."/>
            <person name="Buell C.R."/>
            <person name="Matsumoto T."/>
        </authorList>
    </citation>
    <scope>GENOME REANNOTATION</scope>
    <source>
        <strain>cv. Nipponbare</strain>
    </source>
</reference>
<reference key="4">
    <citation type="journal article" date="2005" name="PLoS Biol.">
        <title>The genomes of Oryza sativa: a history of duplications.</title>
        <authorList>
            <person name="Yu J."/>
            <person name="Wang J."/>
            <person name="Lin W."/>
            <person name="Li S."/>
            <person name="Li H."/>
            <person name="Zhou J."/>
            <person name="Ni P."/>
            <person name="Dong W."/>
            <person name="Hu S."/>
            <person name="Zeng C."/>
            <person name="Zhang J."/>
            <person name="Zhang Y."/>
            <person name="Li R."/>
            <person name="Xu Z."/>
            <person name="Li S."/>
            <person name="Li X."/>
            <person name="Zheng H."/>
            <person name="Cong L."/>
            <person name="Lin L."/>
            <person name="Yin J."/>
            <person name="Geng J."/>
            <person name="Li G."/>
            <person name="Shi J."/>
            <person name="Liu J."/>
            <person name="Lv H."/>
            <person name="Li J."/>
            <person name="Wang J."/>
            <person name="Deng Y."/>
            <person name="Ran L."/>
            <person name="Shi X."/>
            <person name="Wang X."/>
            <person name="Wu Q."/>
            <person name="Li C."/>
            <person name="Ren X."/>
            <person name="Wang J."/>
            <person name="Wang X."/>
            <person name="Li D."/>
            <person name="Liu D."/>
            <person name="Zhang X."/>
            <person name="Ji Z."/>
            <person name="Zhao W."/>
            <person name="Sun Y."/>
            <person name="Zhang Z."/>
            <person name="Bao J."/>
            <person name="Han Y."/>
            <person name="Dong L."/>
            <person name="Ji J."/>
            <person name="Chen P."/>
            <person name="Wu S."/>
            <person name="Liu J."/>
            <person name="Xiao Y."/>
            <person name="Bu D."/>
            <person name="Tan J."/>
            <person name="Yang L."/>
            <person name="Ye C."/>
            <person name="Zhang J."/>
            <person name="Xu J."/>
            <person name="Zhou Y."/>
            <person name="Yu Y."/>
            <person name="Zhang B."/>
            <person name="Zhuang S."/>
            <person name="Wei H."/>
            <person name="Liu B."/>
            <person name="Lei M."/>
            <person name="Yu H."/>
            <person name="Li Y."/>
            <person name="Xu H."/>
            <person name="Wei S."/>
            <person name="He X."/>
            <person name="Fang L."/>
            <person name="Zhang Z."/>
            <person name="Zhang Y."/>
            <person name="Huang X."/>
            <person name="Su Z."/>
            <person name="Tong W."/>
            <person name="Li J."/>
            <person name="Tong Z."/>
            <person name="Li S."/>
            <person name="Ye J."/>
            <person name="Wang L."/>
            <person name="Fang L."/>
            <person name="Lei T."/>
            <person name="Chen C.-S."/>
            <person name="Chen H.-C."/>
            <person name="Xu Z."/>
            <person name="Li H."/>
            <person name="Huang H."/>
            <person name="Zhang F."/>
            <person name="Xu H."/>
            <person name="Li N."/>
            <person name="Zhao C."/>
            <person name="Li S."/>
            <person name="Dong L."/>
            <person name="Huang Y."/>
            <person name="Li L."/>
            <person name="Xi Y."/>
            <person name="Qi Q."/>
            <person name="Li W."/>
            <person name="Zhang B."/>
            <person name="Hu W."/>
            <person name="Zhang Y."/>
            <person name="Tian X."/>
            <person name="Jiao Y."/>
            <person name="Liang X."/>
            <person name="Jin J."/>
            <person name="Gao L."/>
            <person name="Zheng W."/>
            <person name="Hao B."/>
            <person name="Liu S.-M."/>
            <person name="Wang W."/>
            <person name="Yuan L."/>
            <person name="Cao M."/>
            <person name="McDermott J."/>
            <person name="Samudrala R."/>
            <person name="Wang J."/>
            <person name="Wong G.K.-S."/>
            <person name="Yang H."/>
        </authorList>
    </citation>
    <scope>NUCLEOTIDE SEQUENCE [LARGE SCALE GENOMIC DNA]</scope>
    <source>
        <strain>cv. Nipponbare</strain>
    </source>
</reference>
<comment type="function">
    <text evidence="1">May act as a scaffolding protein within caveolar membranes, functionally participating in formation of caveolae or caveolae-like vesicles.</text>
</comment>
<comment type="subcellular location">
    <subcellularLocation>
        <location evidence="3">Cell membrane</location>
        <topology evidence="3">Lipid-anchor</topology>
    </subcellularLocation>
    <subcellularLocation>
        <location evidence="1">Membrane</location>
        <location evidence="1">Caveola</location>
    </subcellularLocation>
</comment>
<comment type="PTM">
    <text evidence="3">May be palmitoylated.</text>
</comment>
<comment type="similarity">
    <text evidence="3">Belongs to the band 7/mec-2 family. Flotillin subfamily.</text>
</comment>
<comment type="sequence caution" evidence="3">
    <conflict type="frameshift">
        <sequence resource="EMBL-CDS" id="EAZ16455"/>
    </conflict>
</comment>
<evidence type="ECO:0000250" key="1"/>
<evidence type="ECO:0000255" key="2"/>
<evidence type="ECO:0000305" key="3"/>
<protein>
    <recommendedName>
        <fullName>Flotillin-like protein 2</fullName>
    </recommendedName>
    <alternativeName>
        <fullName>Nodulin-like protein 2</fullName>
    </alternativeName>
</protein>
<accession>Q8LNW4</accession>
<accession>A3C5U2</accession>
<name>FLOT2_ORYSJ</name>
<keyword id="KW-1003">Cell membrane</keyword>
<keyword id="KW-0175">Coiled coil</keyword>
<keyword id="KW-0449">Lipoprotein</keyword>
<keyword id="KW-0472">Membrane</keyword>
<keyword id="KW-0564">Palmitate</keyword>
<keyword id="KW-1185">Reference proteome</keyword>
<feature type="chain" id="PRO_0000395213" description="Flotillin-like protein 2">
    <location>
        <begin position="1"/>
        <end position="499"/>
    </location>
</feature>
<feature type="coiled-coil region" evidence="2">
    <location>
        <begin position="243"/>
        <end position="319"/>
    </location>
</feature>
<feature type="lipid moiety-binding region" description="S-palmitoyl cysteine" evidence="2">
    <location>
        <position position="37"/>
    </location>
</feature>
<proteinExistence type="inferred from homology"/>
<organism>
    <name type="scientific">Oryza sativa subsp. japonica</name>
    <name type="common">Rice</name>
    <dbReference type="NCBI Taxonomy" id="39947"/>
    <lineage>
        <taxon>Eukaryota</taxon>
        <taxon>Viridiplantae</taxon>
        <taxon>Streptophyta</taxon>
        <taxon>Embryophyta</taxon>
        <taxon>Tracheophyta</taxon>
        <taxon>Spermatophyta</taxon>
        <taxon>Magnoliopsida</taxon>
        <taxon>Liliopsida</taxon>
        <taxon>Poales</taxon>
        <taxon>Poaceae</taxon>
        <taxon>BOP clade</taxon>
        <taxon>Oryzoideae</taxon>
        <taxon>Oryzeae</taxon>
        <taxon>Oryzinae</taxon>
        <taxon>Oryza</taxon>
        <taxon>Oryza sativa</taxon>
    </lineage>
</organism>